<gene>
    <name type="primary">actR</name>
    <name type="ordered locus">Smed_3273</name>
</gene>
<comment type="function">
    <text>Member of the two-component regulatory system ActS/ActR acting in acid tolerance. These data implicate that a two-component sensor may be involved in pH sensing and/or response.</text>
</comment>
<comment type="PTM">
    <text evidence="2">Phosphorylated by ActS.</text>
</comment>
<sequence length="194" mass="21421">MIEKSTPAPITHAADADLIGPDKSLLIVDDDTAFLRRLARAMEARGFAVEIAESVAEGIAKAKTRPPKHAVIDLRLGDGSGLDVIEAIRGRRDDTRMIVLTGYGNIATAVNAVKLGALDYLAKPADADDILAALIQRPGERVEPPENPMSADRVRWEHIQRVYEMCERNVSETARRLNMHRRTLQRILAKRAPK</sequence>
<proteinExistence type="inferred from homology"/>
<name>ACTR_SINMW</name>
<protein>
    <recommendedName>
        <fullName>Acid tolerance regulatory protein ActR</fullName>
    </recommendedName>
</protein>
<accession>A6UEL7</accession>
<accession>Q52913</accession>
<organism>
    <name type="scientific">Sinorhizobium medicae (strain WSM419)</name>
    <name type="common">Ensifer medicae</name>
    <dbReference type="NCBI Taxonomy" id="366394"/>
    <lineage>
        <taxon>Bacteria</taxon>
        <taxon>Pseudomonadati</taxon>
        <taxon>Pseudomonadota</taxon>
        <taxon>Alphaproteobacteria</taxon>
        <taxon>Hyphomicrobiales</taxon>
        <taxon>Rhizobiaceae</taxon>
        <taxon>Sinorhizobium/Ensifer group</taxon>
        <taxon>Sinorhizobium</taxon>
    </lineage>
</organism>
<dbReference type="EMBL" id="L39938">
    <property type="protein sequence ID" value="AAB38421.2"/>
    <property type="molecule type" value="Genomic_DNA"/>
</dbReference>
<dbReference type="EMBL" id="CP000738">
    <property type="protein sequence ID" value="ABR62097.1"/>
    <property type="molecule type" value="Genomic_DNA"/>
</dbReference>
<dbReference type="RefSeq" id="WP_012067478.1">
    <property type="nucleotide sequence ID" value="NC_009636.1"/>
</dbReference>
<dbReference type="RefSeq" id="YP_001328932.1">
    <property type="nucleotide sequence ID" value="NC_009636.1"/>
</dbReference>
<dbReference type="SMR" id="A6UEL7"/>
<dbReference type="STRING" id="366394.Smed_3273"/>
<dbReference type="GeneID" id="61610855"/>
<dbReference type="KEGG" id="smd:Smed_3273"/>
<dbReference type="PATRIC" id="fig|366394.8.peg.6514"/>
<dbReference type="eggNOG" id="COG4567">
    <property type="taxonomic scope" value="Bacteria"/>
</dbReference>
<dbReference type="HOGENOM" id="CLU_000445_69_6_5"/>
<dbReference type="OrthoDB" id="9802426at2"/>
<dbReference type="Proteomes" id="UP000001108">
    <property type="component" value="Chromosome"/>
</dbReference>
<dbReference type="GO" id="GO:0003677">
    <property type="term" value="F:DNA binding"/>
    <property type="evidence" value="ECO:0007669"/>
    <property type="project" value="UniProtKB-KW"/>
</dbReference>
<dbReference type="GO" id="GO:0000160">
    <property type="term" value="P:phosphorelay signal transduction system"/>
    <property type="evidence" value="ECO:0007669"/>
    <property type="project" value="UniProtKB-KW"/>
</dbReference>
<dbReference type="CDD" id="cd17563">
    <property type="entry name" value="REC_RegA-like"/>
    <property type="match status" value="1"/>
</dbReference>
<dbReference type="FunFam" id="1.10.10.60:FF:000036">
    <property type="entry name" value="Two-component system response regulator"/>
    <property type="match status" value="1"/>
</dbReference>
<dbReference type="FunFam" id="3.40.50.2300:FF:000205">
    <property type="entry name" value="Two-component system response regulator"/>
    <property type="match status" value="1"/>
</dbReference>
<dbReference type="Gene3D" id="3.40.50.2300">
    <property type="match status" value="1"/>
</dbReference>
<dbReference type="Gene3D" id="1.10.10.60">
    <property type="entry name" value="Homeodomain-like"/>
    <property type="match status" value="1"/>
</dbReference>
<dbReference type="InterPro" id="IPR047772">
    <property type="entry name" value="ActR_PrrA_rreg"/>
</dbReference>
<dbReference type="InterPro" id="IPR050595">
    <property type="entry name" value="Bact_response_regulator"/>
</dbReference>
<dbReference type="InterPro" id="IPR011006">
    <property type="entry name" value="CheY-like_superfamily"/>
</dbReference>
<dbReference type="InterPro" id="IPR001789">
    <property type="entry name" value="Sig_transdc_resp-reg_receiver"/>
</dbReference>
<dbReference type="NCBIfam" id="NF033791">
    <property type="entry name" value="ActR_PrrA_rreg"/>
    <property type="match status" value="1"/>
</dbReference>
<dbReference type="PANTHER" id="PTHR44591:SF14">
    <property type="entry name" value="PROTEIN PILG"/>
    <property type="match status" value="1"/>
</dbReference>
<dbReference type="PANTHER" id="PTHR44591">
    <property type="entry name" value="STRESS RESPONSE REGULATOR PROTEIN 1"/>
    <property type="match status" value="1"/>
</dbReference>
<dbReference type="Pfam" id="PF00072">
    <property type="entry name" value="Response_reg"/>
    <property type="match status" value="1"/>
</dbReference>
<dbReference type="SMART" id="SM00448">
    <property type="entry name" value="REC"/>
    <property type="match status" value="1"/>
</dbReference>
<dbReference type="SUPFAM" id="SSF52172">
    <property type="entry name" value="CheY-like"/>
    <property type="match status" value="1"/>
</dbReference>
<dbReference type="PROSITE" id="PS50110">
    <property type="entry name" value="RESPONSE_REGULATORY"/>
    <property type="match status" value="1"/>
</dbReference>
<keyword id="KW-0238">DNA-binding</keyword>
<keyword id="KW-0597">Phosphoprotein</keyword>
<keyword id="KW-0804">Transcription</keyword>
<keyword id="KW-0805">Transcription regulation</keyword>
<keyword id="KW-0902">Two-component regulatory system</keyword>
<reference key="1">
    <citation type="journal article" date="1996" name="Microbiology">
        <title>Acid tolerance in Rhizobium meliloti strain WSM419 involves a two-component sensor-regulator system.</title>
        <authorList>
            <person name="Tiwari R.P."/>
            <person name="Reeve W.G."/>
            <person name="Dilworth M.J."/>
            <person name="Glenn A.R."/>
        </authorList>
    </citation>
    <scope>NUCLEOTIDE SEQUENCE [GENOMIC DNA]</scope>
</reference>
<reference key="2">
    <citation type="submission" date="2007-06" db="EMBL/GenBank/DDBJ databases">
        <title>Complete sequence of Sinorhizobium medicae WSM419 chromosome.</title>
        <authorList>
            <consortium name="US DOE Joint Genome Institute"/>
            <person name="Copeland A."/>
            <person name="Lucas S."/>
            <person name="Lapidus A."/>
            <person name="Barry K."/>
            <person name="Glavina del Rio T."/>
            <person name="Dalin E."/>
            <person name="Tice H."/>
            <person name="Pitluck S."/>
            <person name="Chain P."/>
            <person name="Malfatti S."/>
            <person name="Shin M."/>
            <person name="Vergez L."/>
            <person name="Schmutz J."/>
            <person name="Larimer F."/>
            <person name="Land M."/>
            <person name="Hauser L."/>
            <person name="Kyrpides N."/>
            <person name="Mikhailova N."/>
            <person name="Reeve W.G."/>
            <person name="Richardson P."/>
        </authorList>
    </citation>
    <scope>NUCLEOTIDE SEQUENCE [LARGE SCALE GENOMIC DNA]</scope>
    <source>
        <strain>WSM419</strain>
    </source>
</reference>
<feature type="chain" id="PRO_0000310444" description="Acid tolerance regulatory protein ActR">
    <location>
        <begin position="1"/>
        <end position="194"/>
    </location>
</feature>
<feature type="domain" description="Response regulatory" evidence="1">
    <location>
        <begin position="24"/>
        <end position="138"/>
    </location>
</feature>
<feature type="modified residue" description="4-aspartylphosphate" evidence="1">
    <location>
        <position position="73"/>
    </location>
</feature>
<evidence type="ECO:0000255" key="1">
    <source>
        <dbReference type="PROSITE-ProRule" id="PRU00169"/>
    </source>
</evidence>
<evidence type="ECO:0000305" key="2"/>